<accession>Q9SN22</accession>
<dbReference type="EMBL" id="AL132978">
    <property type="protein sequence ID" value="CAB62103.1"/>
    <property type="molecule type" value="Genomic_DNA"/>
</dbReference>
<dbReference type="EMBL" id="CP002686">
    <property type="protein sequence ID" value="AEE78610.1"/>
    <property type="molecule type" value="Genomic_DNA"/>
</dbReference>
<dbReference type="EMBL" id="BT012553">
    <property type="protein sequence ID" value="AAS99697.1"/>
    <property type="molecule type" value="mRNA"/>
</dbReference>
<dbReference type="EMBL" id="AK226623">
    <property type="protein sequence ID" value="BAE98735.1"/>
    <property type="molecule type" value="mRNA"/>
</dbReference>
<dbReference type="PIR" id="T45848">
    <property type="entry name" value="T45848"/>
</dbReference>
<dbReference type="RefSeq" id="NP_190564.1">
    <property type="nucleotide sequence ID" value="NM_114855.4"/>
</dbReference>
<dbReference type="SMR" id="Q9SN22"/>
<dbReference type="BioGRID" id="9475">
    <property type="interactions" value="9"/>
</dbReference>
<dbReference type="FunCoup" id="Q9SN22">
    <property type="interactions" value="43"/>
</dbReference>
<dbReference type="IntAct" id="Q9SN22">
    <property type="interactions" value="9"/>
</dbReference>
<dbReference type="STRING" id="3702.Q9SN22"/>
<dbReference type="PaxDb" id="3702-AT3G49950.1"/>
<dbReference type="EnsemblPlants" id="AT3G49950.1">
    <property type="protein sequence ID" value="AT3G49950.1"/>
    <property type="gene ID" value="AT3G49950"/>
</dbReference>
<dbReference type="GeneID" id="824157"/>
<dbReference type="Gramene" id="AT3G49950.1">
    <property type="protein sequence ID" value="AT3G49950.1"/>
    <property type="gene ID" value="AT3G49950"/>
</dbReference>
<dbReference type="KEGG" id="ath:AT3G49950"/>
<dbReference type="Araport" id="AT3G49950"/>
<dbReference type="TAIR" id="AT3G49950"/>
<dbReference type="eggNOG" id="ENOG502QR1S">
    <property type="taxonomic scope" value="Eukaryota"/>
</dbReference>
<dbReference type="HOGENOM" id="CLU_011924_5_0_1"/>
<dbReference type="InParanoid" id="Q9SN22"/>
<dbReference type="OMA" id="KRRWIER"/>
<dbReference type="PhylomeDB" id="Q9SN22"/>
<dbReference type="PRO" id="PR:Q9SN22"/>
<dbReference type="Proteomes" id="UP000006548">
    <property type="component" value="Chromosome 3"/>
</dbReference>
<dbReference type="ExpressionAtlas" id="Q9SN22">
    <property type="expression patterns" value="baseline and differential"/>
</dbReference>
<dbReference type="GO" id="GO:0005634">
    <property type="term" value="C:nucleus"/>
    <property type="evidence" value="ECO:0007669"/>
    <property type="project" value="UniProtKB-SubCell"/>
</dbReference>
<dbReference type="GO" id="GO:0003700">
    <property type="term" value="F:DNA-binding transcription factor activity"/>
    <property type="evidence" value="ECO:0000250"/>
    <property type="project" value="TAIR"/>
</dbReference>
<dbReference type="GO" id="GO:0006355">
    <property type="term" value="P:regulation of DNA-templated transcription"/>
    <property type="evidence" value="ECO:0000304"/>
    <property type="project" value="TAIR"/>
</dbReference>
<dbReference type="InterPro" id="IPR005202">
    <property type="entry name" value="TF_GRAS"/>
</dbReference>
<dbReference type="PANTHER" id="PTHR31636">
    <property type="entry name" value="OSJNBA0084A10.13 PROTEIN-RELATED"/>
    <property type="match status" value="1"/>
</dbReference>
<dbReference type="Pfam" id="PF03514">
    <property type="entry name" value="GRAS"/>
    <property type="match status" value="1"/>
</dbReference>
<dbReference type="PROSITE" id="PS50985">
    <property type="entry name" value="GRAS"/>
    <property type="match status" value="1"/>
</dbReference>
<name>SCL32_ARATH</name>
<feature type="chain" id="PRO_0000350869" description="Scarecrow-like protein 32">
    <location>
        <begin position="1"/>
        <end position="410"/>
    </location>
</feature>
<feature type="domain" description="GRAS" evidence="2">
    <location>
        <begin position="18"/>
        <end position="408"/>
    </location>
</feature>
<feature type="region of interest" description="Leucine repeat I (LRI)" evidence="2">
    <location>
        <begin position="25"/>
        <end position="88"/>
    </location>
</feature>
<feature type="region of interest" description="VHIID" evidence="2">
    <location>
        <begin position="107"/>
        <end position="188"/>
    </location>
</feature>
<feature type="region of interest" description="Leucine repeat II (LRII)" evidence="2">
    <location>
        <begin position="190"/>
        <end position="227"/>
    </location>
</feature>
<feature type="region of interest" description="PFYRE" evidence="2">
    <location>
        <begin position="237"/>
        <end position="329"/>
    </location>
</feature>
<feature type="region of interest" description="SAW" evidence="2">
    <location>
        <begin position="332"/>
        <end position="408"/>
    </location>
</feature>
<feature type="short sequence motif" description="VHIID" evidence="2">
    <location>
        <begin position="138"/>
        <end position="142"/>
    </location>
</feature>
<reference key="1">
    <citation type="journal article" date="2000" name="Nature">
        <title>Sequence and analysis of chromosome 3 of the plant Arabidopsis thaliana.</title>
        <authorList>
            <person name="Salanoubat M."/>
            <person name="Lemcke K."/>
            <person name="Rieger M."/>
            <person name="Ansorge W."/>
            <person name="Unseld M."/>
            <person name="Fartmann B."/>
            <person name="Valle G."/>
            <person name="Bloecker H."/>
            <person name="Perez-Alonso M."/>
            <person name="Obermaier B."/>
            <person name="Delseny M."/>
            <person name="Boutry M."/>
            <person name="Grivell L.A."/>
            <person name="Mache R."/>
            <person name="Puigdomenech P."/>
            <person name="De Simone V."/>
            <person name="Choisne N."/>
            <person name="Artiguenave F."/>
            <person name="Robert C."/>
            <person name="Brottier P."/>
            <person name="Wincker P."/>
            <person name="Cattolico L."/>
            <person name="Weissenbach J."/>
            <person name="Saurin W."/>
            <person name="Quetier F."/>
            <person name="Schaefer M."/>
            <person name="Mueller-Auer S."/>
            <person name="Gabel C."/>
            <person name="Fuchs M."/>
            <person name="Benes V."/>
            <person name="Wurmbach E."/>
            <person name="Drzonek H."/>
            <person name="Erfle H."/>
            <person name="Jordan N."/>
            <person name="Bangert S."/>
            <person name="Wiedelmann R."/>
            <person name="Kranz H."/>
            <person name="Voss H."/>
            <person name="Holland R."/>
            <person name="Brandt P."/>
            <person name="Nyakatura G."/>
            <person name="Vezzi A."/>
            <person name="D'Angelo M."/>
            <person name="Pallavicini A."/>
            <person name="Toppo S."/>
            <person name="Simionati B."/>
            <person name="Conrad A."/>
            <person name="Hornischer K."/>
            <person name="Kauer G."/>
            <person name="Loehnert T.-H."/>
            <person name="Nordsiek G."/>
            <person name="Reichelt J."/>
            <person name="Scharfe M."/>
            <person name="Schoen O."/>
            <person name="Bargues M."/>
            <person name="Terol J."/>
            <person name="Climent J."/>
            <person name="Navarro P."/>
            <person name="Collado C."/>
            <person name="Perez-Perez A."/>
            <person name="Ottenwaelder B."/>
            <person name="Duchemin D."/>
            <person name="Cooke R."/>
            <person name="Laudie M."/>
            <person name="Berger-Llauro C."/>
            <person name="Purnelle B."/>
            <person name="Masuy D."/>
            <person name="de Haan M."/>
            <person name="Maarse A.C."/>
            <person name="Alcaraz J.-P."/>
            <person name="Cottet A."/>
            <person name="Casacuberta E."/>
            <person name="Monfort A."/>
            <person name="Argiriou A."/>
            <person name="Flores M."/>
            <person name="Liguori R."/>
            <person name="Vitale D."/>
            <person name="Mannhaupt G."/>
            <person name="Haase D."/>
            <person name="Schoof H."/>
            <person name="Rudd S."/>
            <person name="Zaccaria P."/>
            <person name="Mewes H.-W."/>
            <person name="Mayer K.F.X."/>
            <person name="Kaul S."/>
            <person name="Town C.D."/>
            <person name="Koo H.L."/>
            <person name="Tallon L.J."/>
            <person name="Jenkins J."/>
            <person name="Rooney T."/>
            <person name="Rizzo M."/>
            <person name="Walts A."/>
            <person name="Utterback T."/>
            <person name="Fujii C.Y."/>
            <person name="Shea T.P."/>
            <person name="Creasy T.H."/>
            <person name="Haas B."/>
            <person name="Maiti R."/>
            <person name="Wu D."/>
            <person name="Peterson J."/>
            <person name="Van Aken S."/>
            <person name="Pai G."/>
            <person name="Militscher J."/>
            <person name="Sellers P."/>
            <person name="Gill J.E."/>
            <person name="Feldblyum T.V."/>
            <person name="Preuss D."/>
            <person name="Lin X."/>
            <person name="Nierman W.C."/>
            <person name="Salzberg S.L."/>
            <person name="White O."/>
            <person name="Venter J.C."/>
            <person name="Fraser C.M."/>
            <person name="Kaneko T."/>
            <person name="Nakamura Y."/>
            <person name="Sato S."/>
            <person name="Kato T."/>
            <person name="Asamizu E."/>
            <person name="Sasamoto S."/>
            <person name="Kimura T."/>
            <person name="Idesawa K."/>
            <person name="Kawashima K."/>
            <person name="Kishida Y."/>
            <person name="Kiyokawa C."/>
            <person name="Kohara M."/>
            <person name="Matsumoto M."/>
            <person name="Matsuno A."/>
            <person name="Muraki A."/>
            <person name="Nakayama S."/>
            <person name="Nakazaki N."/>
            <person name="Shinpo S."/>
            <person name="Takeuchi C."/>
            <person name="Wada T."/>
            <person name="Watanabe A."/>
            <person name="Yamada M."/>
            <person name="Yasuda M."/>
            <person name="Tabata S."/>
        </authorList>
    </citation>
    <scope>NUCLEOTIDE SEQUENCE [LARGE SCALE GENOMIC DNA]</scope>
    <source>
        <strain>cv. Columbia</strain>
    </source>
</reference>
<reference key="2">
    <citation type="journal article" date="2017" name="Plant J.">
        <title>Araport11: a complete reannotation of the Arabidopsis thaliana reference genome.</title>
        <authorList>
            <person name="Cheng C.Y."/>
            <person name="Krishnakumar V."/>
            <person name="Chan A.P."/>
            <person name="Thibaud-Nissen F."/>
            <person name="Schobel S."/>
            <person name="Town C.D."/>
        </authorList>
    </citation>
    <scope>GENOME REANNOTATION</scope>
    <source>
        <strain>cv. Columbia</strain>
    </source>
</reference>
<reference key="3">
    <citation type="submission" date="2004-04" db="EMBL/GenBank/DDBJ databases">
        <title>Arabidopsis ORF clones.</title>
        <authorList>
            <person name="Kim C.J."/>
            <person name="Chen H."/>
            <person name="Cheuk R.F."/>
            <person name="Shinn P."/>
            <person name="Carninci P."/>
            <person name="Hayashizaki Y."/>
            <person name="Ishida J."/>
            <person name="Kamiya A."/>
            <person name="Kawai J."/>
            <person name="Narusaka M."/>
            <person name="Sakurai T."/>
            <person name="Satou M."/>
            <person name="Seki M."/>
            <person name="Shinozaki K."/>
            <person name="Ecker J.R."/>
        </authorList>
    </citation>
    <scope>NUCLEOTIDE SEQUENCE [LARGE SCALE MRNA]</scope>
    <source>
        <strain>cv. Columbia</strain>
    </source>
</reference>
<reference key="4">
    <citation type="submission" date="2006-07" db="EMBL/GenBank/DDBJ databases">
        <title>Large-scale analysis of RIKEN Arabidopsis full-length (RAFL) cDNAs.</title>
        <authorList>
            <person name="Totoki Y."/>
            <person name="Seki M."/>
            <person name="Ishida J."/>
            <person name="Nakajima M."/>
            <person name="Enju A."/>
            <person name="Kamiya A."/>
            <person name="Narusaka M."/>
            <person name="Shin-i T."/>
            <person name="Nakagawa M."/>
            <person name="Sakamoto N."/>
            <person name="Oishi K."/>
            <person name="Kohara Y."/>
            <person name="Kobayashi M."/>
            <person name="Toyoda A."/>
            <person name="Sakaki Y."/>
            <person name="Sakurai T."/>
            <person name="Iida K."/>
            <person name="Akiyama K."/>
            <person name="Satou M."/>
            <person name="Toyoda T."/>
            <person name="Konagaya A."/>
            <person name="Carninci P."/>
            <person name="Kawai J."/>
            <person name="Hayashizaki Y."/>
            <person name="Shinozaki K."/>
        </authorList>
    </citation>
    <scope>NUCLEOTIDE SEQUENCE [LARGE SCALE MRNA]</scope>
    <source>
        <strain>cv. Columbia</strain>
    </source>
</reference>
<reference key="5">
    <citation type="journal article" date="2004" name="Plant Mol. Biol.">
        <title>Genome-wide analysis of the GRAS gene family in rice and Arabidopsis.</title>
        <authorList>
            <person name="Tian C."/>
            <person name="Wan P."/>
            <person name="Sun S."/>
            <person name="Li J."/>
            <person name="Chen M."/>
        </authorList>
    </citation>
    <scope>GENE FAMILY</scope>
</reference>
<reference key="6">
    <citation type="journal article" date="2008" name="Plant Mol. Biol.">
        <title>Large-scale analysis of the GRAS gene family in Arabidopsis thaliana.</title>
        <authorList>
            <person name="Lee M.-H."/>
            <person name="Kim B."/>
            <person name="Song S.-K."/>
            <person name="Heo J.-O."/>
            <person name="Yu N.-I."/>
            <person name="Lee S.A."/>
            <person name="Kim M."/>
            <person name="Kim D.G."/>
            <person name="Sohn S.O."/>
            <person name="Lim C.E."/>
            <person name="Chang K.S."/>
            <person name="Lee M.M."/>
            <person name="Lim J."/>
        </authorList>
    </citation>
    <scope>GENE FAMILY</scope>
    <scope>SUBCELLULAR LOCATION</scope>
    <scope>TISSUE SPECIFICITY</scope>
</reference>
<comment type="function">
    <text evidence="1">Probable transcription factor involved in plant development.</text>
</comment>
<comment type="interaction">
    <interactant intactId="EBI-15196807">
        <id>Q9SN22</id>
    </interactant>
    <interactant intactId="EBI-15200862">
        <id>Q9SCQ6</id>
        <label>GAF1</label>
    </interactant>
    <organismsDiffer>false</organismsDiffer>
    <experiments>4</experiments>
</comment>
<comment type="interaction">
    <interactant intactId="EBI-15196807">
        <id>Q9SN22</id>
    </interactant>
    <interactant intactId="EBI-1568600">
        <id>Q9ZWA6</id>
        <label>MGP</label>
    </interactant>
    <organismsDiffer>false</organismsDiffer>
    <experiments>3</experiments>
</comment>
<comment type="interaction">
    <interactant intactId="EBI-15196807">
        <id>Q9SN22</id>
    </interactant>
    <interactant intactId="EBI-4428214">
        <id>Q9SQX9</id>
        <label>NAC050</label>
    </interactant>
    <organismsDiffer>false</organismsDiffer>
    <experiments>3</experiments>
</comment>
<comment type="subcellular location">
    <subcellularLocation>
        <location evidence="3">Nucleus</location>
    </subcellularLocation>
</comment>
<comment type="tissue specificity">
    <text evidence="3">Expressed in seedlings, leaves and flowers.</text>
</comment>
<comment type="similarity">
    <text evidence="4">Belongs to the GRAS family.</text>
</comment>
<keyword id="KW-0539">Nucleus</keyword>
<keyword id="KW-1185">Reference proteome</keyword>
<keyword id="KW-0804">Transcription</keyword>
<keyword id="KW-0805">Transcription regulation</keyword>
<sequence length="410" mass="46355">MTKTRILNPTRFPSPKPLRGCGDANFMEQLLLHCATAIDSNDAALTHQILWVLNNIAPPDGDSTQRLTSAFLRALLSRAVSKTPTLSSTISFLPQADELHRFSVVELAAFVDLTPWHRFGFIAANAAILTAVEGYSTVHIVDLSLTHCMQIPTLIDAMASRLNKPPPLLKLTVVSSSDHFPPFINISYEELGSKLVNFATTRNITMEFTIVPSTYSDGFSSLLQQLRIYPSSFNEALVVNCHMMLRYIPEEPLTSSSSSLRTVFLKQLRSLNPRIVTLIEEDVDLTSENLVNRLKSAFNYFWIPFDTTDTFMSEQRRWYEAEISWKIENVVAKEGAERVERTETKRRWIERMREAEFGGVRVKEDAVADVKAMLEEHAVGWGMKKEDDDESLVLTWKGHSVVFATVWVPI</sequence>
<evidence type="ECO:0000250" key="1"/>
<evidence type="ECO:0000255" key="2">
    <source>
        <dbReference type="PROSITE-ProRule" id="PRU01191"/>
    </source>
</evidence>
<evidence type="ECO:0000269" key="3">
    <source>
    </source>
</evidence>
<evidence type="ECO:0000305" key="4"/>
<gene>
    <name type="primary">SCL32</name>
    <name type="ordered locus">At3g49950</name>
    <name type="ORF">F3A4.30</name>
</gene>
<organism>
    <name type="scientific">Arabidopsis thaliana</name>
    <name type="common">Mouse-ear cress</name>
    <dbReference type="NCBI Taxonomy" id="3702"/>
    <lineage>
        <taxon>Eukaryota</taxon>
        <taxon>Viridiplantae</taxon>
        <taxon>Streptophyta</taxon>
        <taxon>Embryophyta</taxon>
        <taxon>Tracheophyta</taxon>
        <taxon>Spermatophyta</taxon>
        <taxon>Magnoliopsida</taxon>
        <taxon>eudicotyledons</taxon>
        <taxon>Gunneridae</taxon>
        <taxon>Pentapetalae</taxon>
        <taxon>rosids</taxon>
        <taxon>malvids</taxon>
        <taxon>Brassicales</taxon>
        <taxon>Brassicaceae</taxon>
        <taxon>Camelineae</taxon>
        <taxon>Arabidopsis</taxon>
    </lineage>
</organism>
<protein>
    <recommendedName>
        <fullName>Scarecrow-like protein 32</fullName>
        <shortName>AtSCL32</shortName>
    </recommendedName>
    <alternativeName>
        <fullName>GRAS family protein 18</fullName>
        <shortName>AtGRAS-18</shortName>
    </alternativeName>
</protein>
<proteinExistence type="evidence at protein level"/>